<proteinExistence type="inferred from homology"/>
<comment type="function">
    <text evidence="1">Involved in transcription antitermination. Required for transcription of ribosomal RNA (rRNA) genes. Binds specifically to the boxA antiterminator sequence of the ribosomal RNA (rrn) operons.</text>
</comment>
<comment type="similarity">
    <text evidence="1">Belongs to the NusB family.</text>
</comment>
<comment type="sequence caution" evidence="2">
    <conflict type="erroneous initiation">
        <sequence resource="EMBL-CDS" id="ABF36622"/>
    </conflict>
</comment>
<keyword id="KW-0694">RNA-binding</keyword>
<keyword id="KW-0804">Transcription</keyword>
<keyword id="KW-0889">Transcription antitermination</keyword>
<keyword id="KW-0805">Transcription regulation</keyword>
<name>NUSB_STRPB</name>
<gene>
    <name evidence="1" type="primary">nusB</name>
    <name type="ordered locus">MGAS2096_Spy1570</name>
</gene>
<organism>
    <name type="scientific">Streptococcus pyogenes serotype M12 (strain MGAS2096)</name>
    <dbReference type="NCBI Taxonomy" id="370553"/>
    <lineage>
        <taxon>Bacteria</taxon>
        <taxon>Bacillati</taxon>
        <taxon>Bacillota</taxon>
        <taxon>Bacilli</taxon>
        <taxon>Lactobacillales</taxon>
        <taxon>Streptococcaceae</taxon>
        <taxon>Streptococcus</taxon>
    </lineage>
</organism>
<dbReference type="EMBL" id="CP000261">
    <property type="protein sequence ID" value="ABF36622.1"/>
    <property type="status" value="ALT_INIT"/>
    <property type="molecule type" value="Genomic_DNA"/>
</dbReference>
<dbReference type="SMR" id="Q1JA39"/>
<dbReference type="KEGG" id="spj:MGAS2096_Spy1570"/>
<dbReference type="HOGENOM" id="CLU_087843_3_2_9"/>
<dbReference type="GO" id="GO:0005829">
    <property type="term" value="C:cytosol"/>
    <property type="evidence" value="ECO:0007669"/>
    <property type="project" value="TreeGrafter"/>
</dbReference>
<dbReference type="GO" id="GO:0003723">
    <property type="term" value="F:RNA binding"/>
    <property type="evidence" value="ECO:0007669"/>
    <property type="project" value="UniProtKB-UniRule"/>
</dbReference>
<dbReference type="GO" id="GO:0006353">
    <property type="term" value="P:DNA-templated transcription termination"/>
    <property type="evidence" value="ECO:0007669"/>
    <property type="project" value="UniProtKB-UniRule"/>
</dbReference>
<dbReference type="GO" id="GO:0031564">
    <property type="term" value="P:transcription antitermination"/>
    <property type="evidence" value="ECO:0007669"/>
    <property type="project" value="UniProtKB-KW"/>
</dbReference>
<dbReference type="Gene3D" id="1.10.940.10">
    <property type="entry name" value="NusB-like"/>
    <property type="match status" value="1"/>
</dbReference>
<dbReference type="HAMAP" id="MF_00073">
    <property type="entry name" value="NusB"/>
    <property type="match status" value="1"/>
</dbReference>
<dbReference type="InterPro" id="IPR035926">
    <property type="entry name" value="NusB-like_sf"/>
</dbReference>
<dbReference type="InterPro" id="IPR011605">
    <property type="entry name" value="NusB_fam"/>
</dbReference>
<dbReference type="InterPro" id="IPR006027">
    <property type="entry name" value="NusB_RsmB_TIM44"/>
</dbReference>
<dbReference type="NCBIfam" id="TIGR01951">
    <property type="entry name" value="nusB"/>
    <property type="match status" value="1"/>
</dbReference>
<dbReference type="NCBIfam" id="NF001223">
    <property type="entry name" value="PRK00202.1-1"/>
    <property type="match status" value="1"/>
</dbReference>
<dbReference type="PANTHER" id="PTHR11078:SF3">
    <property type="entry name" value="ANTITERMINATION NUSB DOMAIN-CONTAINING PROTEIN"/>
    <property type="match status" value="1"/>
</dbReference>
<dbReference type="PANTHER" id="PTHR11078">
    <property type="entry name" value="N UTILIZATION SUBSTANCE PROTEIN B-RELATED"/>
    <property type="match status" value="1"/>
</dbReference>
<dbReference type="Pfam" id="PF01029">
    <property type="entry name" value="NusB"/>
    <property type="match status" value="1"/>
</dbReference>
<dbReference type="SUPFAM" id="SSF48013">
    <property type="entry name" value="NusB-like"/>
    <property type="match status" value="1"/>
</dbReference>
<feature type="chain" id="PRO_0000265603" description="Transcription antitermination protein NusB">
    <location>
        <begin position="1"/>
        <end position="150"/>
    </location>
</feature>
<reference key="1">
    <citation type="journal article" date="2006" name="Proc. Natl. Acad. Sci. U.S.A.">
        <title>Molecular genetic anatomy of inter- and intraserotype variation in the human bacterial pathogen group A Streptococcus.</title>
        <authorList>
            <person name="Beres S.B."/>
            <person name="Richter E.W."/>
            <person name="Nagiec M.J."/>
            <person name="Sumby P."/>
            <person name="Porcella S.F."/>
            <person name="DeLeo F.R."/>
            <person name="Musser J.M."/>
        </authorList>
    </citation>
    <scope>NUCLEOTIDE SEQUENCE [LARGE SCALE GENOMIC DNA]</scope>
    <source>
        <strain>MGAS2096</strain>
    </source>
</reference>
<evidence type="ECO:0000255" key="1">
    <source>
        <dbReference type="HAMAP-Rule" id="MF_00073"/>
    </source>
</evidence>
<evidence type="ECO:0000305" key="2"/>
<protein>
    <recommendedName>
        <fullName evidence="1">Transcription antitermination protein NusB</fullName>
    </recommendedName>
    <alternativeName>
        <fullName evidence="1">Antitermination factor NusB</fullName>
    </alternativeName>
</protein>
<accession>Q1JA39</accession>
<sequence>MTNSFQNSRRDLRERAFQALFNIEMGAELLAASQFAYGYDKVTGEDAQVLELPIFLLSLVTGVNNHKEELDNLISTHLKKGWSLERLTLTDKTLLRLGLFEIKYFDETPDRVALNEIIEVAKKYSDETSAKFINGLLSQYVSEAPSANKS</sequence>